<sequence>MGTHVAPWKQLLFGAIEANSHLSHSSYVQLATIGLNGRPSNRTVVFRGFEENSDRIQINTDLRSRKIEELKHCPFSEMCWYFSDTWEQFRINGRIEVIDASNPDQTKLQQREKAWFANSLRSRLIYVCPTPGSPCNSEQSSQQVKLDPSSGPVPEYCLLLLEPEKVDYLNLKTNQRLFFSSMATGTGEKCWTSEKVNP</sequence>
<name>PPOX2_ARATH</name>
<reference key="1">
    <citation type="journal article" date="1999" name="Nature">
        <title>Sequence and analysis of chromosome 2 of the plant Arabidopsis thaliana.</title>
        <authorList>
            <person name="Lin X."/>
            <person name="Kaul S."/>
            <person name="Rounsley S.D."/>
            <person name="Shea T.P."/>
            <person name="Benito M.-I."/>
            <person name="Town C.D."/>
            <person name="Fujii C.Y."/>
            <person name="Mason T.M."/>
            <person name="Bowman C.L."/>
            <person name="Barnstead M.E."/>
            <person name="Feldblyum T.V."/>
            <person name="Buell C.R."/>
            <person name="Ketchum K.A."/>
            <person name="Lee J.J."/>
            <person name="Ronning C.M."/>
            <person name="Koo H.L."/>
            <person name="Moffat K.S."/>
            <person name="Cronin L.A."/>
            <person name="Shen M."/>
            <person name="Pai G."/>
            <person name="Van Aken S."/>
            <person name="Umayam L."/>
            <person name="Tallon L.J."/>
            <person name="Gill J.E."/>
            <person name="Adams M.D."/>
            <person name="Carrera A.J."/>
            <person name="Creasy T.H."/>
            <person name="Goodman H.M."/>
            <person name="Somerville C.R."/>
            <person name="Copenhaver G.P."/>
            <person name="Preuss D."/>
            <person name="Nierman W.C."/>
            <person name="White O."/>
            <person name="Eisen J.A."/>
            <person name="Salzberg S.L."/>
            <person name="Fraser C.M."/>
            <person name="Venter J.C."/>
        </authorList>
    </citation>
    <scope>NUCLEOTIDE SEQUENCE [LARGE SCALE GENOMIC DNA]</scope>
    <source>
        <strain>cv. Columbia</strain>
    </source>
</reference>
<reference key="2">
    <citation type="journal article" date="2017" name="Plant J.">
        <title>Araport11: a complete reannotation of the Arabidopsis thaliana reference genome.</title>
        <authorList>
            <person name="Cheng C.Y."/>
            <person name="Krishnakumar V."/>
            <person name="Chan A.P."/>
            <person name="Thibaud-Nissen F."/>
            <person name="Schobel S."/>
            <person name="Town C.D."/>
        </authorList>
    </citation>
    <scope>GENOME REANNOTATION</scope>
    <source>
        <strain>cv. Columbia</strain>
    </source>
</reference>
<reference key="3">
    <citation type="submission" date="2006-03" db="EMBL/GenBank/DDBJ databases">
        <title>Arabidopsis ORF clones.</title>
        <authorList>
            <person name="Shinn P."/>
            <person name="Chen H."/>
            <person name="Kim C.J."/>
            <person name="Ecker J.R."/>
        </authorList>
    </citation>
    <scope>NUCLEOTIDE SEQUENCE [LARGE SCALE MRNA]</scope>
</reference>
<reference key="4">
    <citation type="submission" date="2002-03" db="EMBL/GenBank/DDBJ databases">
        <title>Full-length cDNA from Arabidopsis thaliana.</title>
        <authorList>
            <person name="Brover V.V."/>
            <person name="Troukhan M.E."/>
            <person name="Alexandrov N.A."/>
            <person name="Lu Y.-P."/>
            <person name="Flavell R.B."/>
            <person name="Feldmann K.A."/>
        </authorList>
    </citation>
    <scope>NUCLEOTIDE SEQUENCE [LARGE SCALE MRNA]</scope>
</reference>
<reference key="5">
    <citation type="journal article" date="2011" name="Acta Physiol. Plant.">
        <title>Identification of a second pyridoxine (pyridoxamine) 50-phosphate oxidase in Arabidopsis thaliana.</title>
        <authorList>
            <person name="Sang Y."/>
            <person name="Goertzen L.R."/>
            <person name="Tzou Y.-M."/>
            <person name="Locy R.D."/>
            <person name="Singh N.K."/>
        </authorList>
    </citation>
    <scope>FUNCTION</scope>
    <scope>CATALYTIC ACTIVITY</scope>
</reference>
<evidence type="ECO:0000250" key="1"/>
<evidence type="ECO:0000269" key="2">
    <source ref="5"/>
</evidence>
<evidence type="ECO:0000305" key="3"/>
<organism>
    <name type="scientific">Arabidopsis thaliana</name>
    <name type="common">Mouse-ear cress</name>
    <dbReference type="NCBI Taxonomy" id="3702"/>
    <lineage>
        <taxon>Eukaryota</taxon>
        <taxon>Viridiplantae</taxon>
        <taxon>Streptophyta</taxon>
        <taxon>Embryophyta</taxon>
        <taxon>Tracheophyta</taxon>
        <taxon>Spermatophyta</taxon>
        <taxon>Magnoliopsida</taxon>
        <taxon>eudicotyledons</taxon>
        <taxon>Gunneridae</taxon>
        <taxon>Pentapetalae</taxon>
        <taxon>rosids</taxon>
        <taxon>malvids</taxon>
        <taxon>Brassicales</taxon>
        <taxon>Brassicaceae</taxon>
        <taxon>Camelineae</taxon>
        <taxon>Arabidopsis</taxon>
    </lineage>
</organism>
<dbReference type="EC" id="1.4.3.5"/>
<dbReference type="EMBL" id="AC006418">
    <property type="protein sequence ID" value="AAD20168.2"/>
    <property type="molecule type" value="Genomic_DNA"/>
</dbReference>
<dbReference type="EMBL" id="CP002685">
    <property type="protein sequence ID" value="AEC10724.1"/>
    <property type="molecule type" value="Genomic_DNA"/>
</dbReference>
<dbReference type="EMBL" id="AY086412">
    <property type="protein sequence ID" value="AAM63414.1"/>
    <property type="molecule type" value="mRNA"/>
</dbReference>
<dbReference type="EMBL" id="BT024917">
    <property type="protein sequence ID" value="ABD94073.1"/>
    <property type="molecule type" value="mRNA"/>
</dbReference>
<dbReference type="PIR" id="F84904">
    <property type="entry name" value="F84904"/>
</dbReference>
<dbReference type="RefSeq" id="NP_566081.1">
    <property type="nucleotide sequence ID" value="NM_130223.3"/>
</dbReference>
<dbReference type="SMR" id="Q9ZPY1"/>
<dbReference type="FunCoup" id="Q9ZPY1">
    <property type="interactions" value="1535"/>
</dbReference>
<dbReference type="STRING" id="3702.Q9ZPY1"/>
<dbReference type="GlyGen" id="Q9ZPY1">
    <property type="glycosylation" value="1 site"/>
</dbReference>
<dbReference type="iPTMnet" id="Q9ZPY1"/>
<dbReference type="PaxDb" id="3702-AT2G46580.1"/>
<dbReference type="ProteomicsDB" id="236650"/>
<dbReference type="EnsemblPlants" id="AT2G46580.1">
    <property type="protein sequence ID" value="AT2G46580.1"/>
    <property type="gene ID" value="AT2G46580"/>
</dbReference>
<dbReference type="GeneID" id="819270"/>
<dbReference type="Gramene" id="AT2G46580.1">
    <property type="protein sequence ID" value="AT2G46580.1"/>
    <property type="gene ID" value="AT2G46580"/>
</dbReference>
<dbReference type="KEGG" id="ath:AT2G46580"/>
<dbReference type="Araport" id="AT2G46580"/>
<dbReference type="TAIR" id="AT2G46580"/>
<dbReference type="eggNOG" id="KOG4558">
    <property type="taxonomic scope" value="Eukaryota"/>
</dbReference>
<dbReference type="HOGENOM" id="CLU_058669_1_2_1"/>
<dbReference type="InParanoid" id="Q9ZPY1"/>
<dbReference type="OMA" id="SEICWYF"/>
<dbReference type="PhylomeDB" id="Q9ZPY1"/>
<dbReference type="UniPathway" id="UPA01068">
    <property type="reaction ID" value="UER00304"/>
</dbReference>
<dbReference type="UniPathway" id="UPA01068">
    <property type="reaction ID" value="UER00305"/>
</dbReference>
<dbReference type="PRO" id="PR:Q9ZPY1"/>
<dbReference type="Proteomes" id="UP000006548">
    <property type="component" value="Chromosome 2"/>
</dbReference>
<dbReference type="ExpressionAtlas" id="Q9ZPY1">
    <property type="expression patterns" value="baseline and differential"/>
</dbReference>
<dbReference type="GO" id="GO:0010181">
    <property type="term" value="F:FMN binding"/>
    <property type="evidence" value="ECO:0007669"/>
    <property type="project" value="InterPro"/>
</dbReference>
<dbReference type="GO" id="GO:0004733">
    <property type="term" value="F:pyridoxamine phosphate oxidase activity"/>
    <property type="evidence" value="ECO:0000314"/>
    <property type="project" value="UniProtKB"/>
</dbReference>
<dbReference type="GO" id="GO:0009443">
    <property type="term" value="P:pyridoxal 5'-phosphate salvage"/>
    <property type="evidence" value="ECO:0000314"/>
    <property type="project" value="UniProtKB"/>
</dbReference>
<dbReference type="GO" id="GO:0008615">
    <property type="term" value="P:pyridoxine biosynthetic process"/>
    <property type="evidence" value="ECO:0007669"/>
    <property type="project" value="UniProtKB-KW"/>
</dbReference>
<dbReference type="FunFam" id="2.30.110.10:FF:000069">
    <property type="entry name" value="Pyridoxine/pyridoxamine 5'-phosphate oxidase 2"/>
    <property type="match status" value="1"/>
</dbReference>
<dbReference type="Gene3D" id="2.30.110.10">
    <property type="entry name" value="Electron Transport, Fmn-binding Protein, Chain A"/>
    <property type="match status" value="1"/>
</dbReference>
<dbReference type="InterPro" id="IPR000659">
    <property type="entry name" value="Pyridox_Oxase"/>
</dbReference>
<dbReference type="InterPro" id="IPR024624">
    <property type="entry name" value="Pyridox_Oxase_Alr4036_FMN-bd"/>
</dbReference>
<dbReference type="InterPro" id="IPR012349">
    <property type="entry name" value="Split_barrel_FMN-bd"/>
</dbReference>
<dbReference type="PANTHER" id="PTHR10851">
    <property type="entry name" value="PYRIDOXINE-5-PHOSPHATE OXIDASE"/>
    <property type="match status" value="1"/>
</dbReference>
<dbReference type="PANTHER" id="PTHR10851:SF3">
    <property type="entry name" value="PYRIDOXINE_PYRIDOXAMINE 5'-PHOSPHATE OXIDASE 2"/>
    <property type="match status" value="1"/>
</dbReference>
<dbReference type="Pfam" id="PF12766">
    <property type="entry name" value="Pyridox_oxase_2"/>
    <property type="match status" value="1"/>
</dbReference>
<dbReference type="SUPFAM" id="SSF50475">
    <property type="entry name" value="FMN-binding split barrel"/>
    <property type="match status" value="1"/>
</dbReference>
<keyword id="KW-0285">Flavoprotein</keyword>
<keyword id="KW-0288">FMN</keyword>
<keyword id="KW-0560">Oxidoreductase</keyword>
<keyword id="KW-0664">Pyridoxine biosynthesis</keyword>
<keyword id="KW-1185">Reference proteome</keyword>
<protein>
    <recommendedName>
        <fullName>Pyridoxine/pyridoxamine 5'-phosphate oxidase 2</fullName>
        <shortName>AtPPOX1</shortName>
        <ecNumber>1.4.3.5</ecNumber>
    </recommendedName>
</protein>
<gene>
    <name type="primary">PPOX2</name>
    <name type="ordered locus">At2g46580</name>
    <name type="ORF">F13A10.11</name>
</gene>
<proteinExistence type="evidence at protein level"/>
<feature type="chain" id="PRO_0000420550" description="Pyridoxine/pyridoxamine 5'-phosphate oxidase 2">
    <location>
        <begin position="1"/>
        <end position="198"/>
    </location>
</feature>
<feature type="binding site" evidence="1">
    <location>
        <position position="42"/>
    </location>
    <ligand>
        <name>FMN</name>
        <dbReference type="ChEBI" id="CHEBI:58210"/>
    </ligand>
</feature>
<feature type="binding site" evidence="1">
    <location>
        <begin position="59"/>
        <end position="60"/>
    </location>
    <ligand>
        <name>FMN</name>
        <dbReference type="ChEBI" id="CHEBI:58210"/>
    </ligand>
</feature>
<feature type="binding site" evidence="1">
    <location>
        <position position="66"/>
    </location>
    <ligand>
        <name>FMN</name>
        <dbReference type="ChEBI" id="CHEBI:58210"/>
    </ligand>
</feature>
<feature type="binding site" evidence="1">
    <location>
        <begin position="121"/>
        <end position="122"/>
    </location>
    <ligand>
        <name>FMN</name>
        <dbReference type="ChEBI" id="CHEBI:58210"/>
    </ligand>
</feature>
<comment type="function">
    <text evidence="2">Catalyzes the oxidation of either pyridoxine 5'-phosphate (PNP) or pyridoxamine 5'-phosphate (PMP) into pyridoxal 5'-phosphate (PLP). Has an in vitro catalytic efficiency for PNP approximately 300-fold lower than that of PPOX1.</text>
</comment>
<comment type="catalytic activity">
    <reaction evidence="2">
        <text>pyridoxamine 5'-phosphate + O2 + H2O = pyridoxal 5'-phosphate + H2O2 + NH4(+)</text>
        <dbReference type="Rhea" id="RHEA:15817"/>
        <dbReference type="ChEBI" id="CHEBI:15377"/>
        <dbReference type="ChEBI" id="CHEBI:15379"/>
        <dbReference type="ChEBI" id="CHEBI:16240"/>
        <dbReference type="ChEBI" id="CHEBI:28938"/>
        <dbReference type="ChEBI" id="CHEBI:58451"/>
        <dbReference type="ChEBI" id="CHEBI:597326"/>
        <dbReference type="EC" id="1.4.3.5"/>
    </reaction>
</comment>
<comment type="catalytic activity">
    <reaction evidence="2">
        <text>pyridoxine 5'-phosphate + O2 = pyridoxal 5'-phosphate + H2O2</text>
        <dbReference type="Rhea" id="RHEA:15149"/>
        <dbReference type="ChEBI" id="CHEBI:15379"/>
        <dbReference type="ChEBI" id="CHEBI:16240"/>
        <dbReference type="ChEBI" id="CHEBI:58589"/>
        <dbReference type="ChEBI" id="CHEBI:597326"/>
        <dbReference type="EC" id="1.4.3.5"/>
    </reaction>
</comment>
<comment type="cofactor">
    <cofactor evidence="1">
        <name>FMN</name>
        <dbReference type="ChEBI" id="CHEBI:58210"/>
    </cofactor>
    <text evidence="1">Binds 1 FMN per subunit.</text>
</comment>
<comment type="pathway">
    <text>Cofactor metabolism; pyridoxal 5'-phosphate salvage; pyridoxal 5'-phosphate from pyridoxamine 5'-phosphate: step 1/1.</text>
</comment>
<comment type="pathway">
    <text>Cofactor metabolism; pyridoxal 5'-phosphate salvage; pyridoxal 5'-phosphate from pyridoxine 5'-phosphate: step 1/1.</text>
</comment>
<comment type="subunit">
    <text evidence="1">Homodimer.</text>
</comment>
<comment type="similarity">
    <text evidence="3">Belongs to the pyridoxamine 5'-phosphate oxidase family.</text>
</comment>
<accession>Q9ZPY1</accession>